<proteinExistence type="inferred from homology"/>
<name>SYE_ECO57</name>
<comment type="function">
    <text evidence="1">Catalyzes the attachment of glutamate to tRNA(Glu) in a two-step reaction: glutamate is first activated by ATP to form Glu-AMP and then transferred to the acceptor end of tRNA(Glu).</text>
</comment>
<comment type="catalytic activity">
    <reaction evidence="1">
        <text>tRNA(Glu) + L-glutamate + ATP = L-glutamyl-tRNA(Glu) + AMP + diphosphate</text>
        <dbReference type="Rhea" id="RHEA:23540"/>
        <dbReference type="Rhea" id="RHEA-COMP:9663"/>
        <dbReference type="Rhea" id="RHEA-COMP:9680"/>
        <dbReference type="ChEBI" id="CHEBI:29985"/>
        <dbReference type="ChEBI" id="CHEBI:30616"/>
        <dbReference type="ChEBI" id="CHEBI:33019"/>
        <dbReference type="ChEBI" id="CHEBI:78442"/>
        <dbReference type="ChEBI" id="CHEBI:78520"/>
        <dbReference type="ChEBI" id="CHEBI:456215"/>
        <dbReference type="EC" id="6.1.1.17"/>
    </reaction>
</comment>
<comment type="cofactor">
    <cofactor evidence="1">
        <name>Zn(2+)</name>
        <dbReference type="ChEBI" id="CHEBI:29105"/>
    </cofactor>
    <text evidence="1">Binds 1 zinc ion per subunit.</text>
</comment>
<comment type="subunit">
    <text evidence="1">Monomer.</text>
</comment>
<comment type="subcellular location">
    <subcellularLocation>
        <location evidence="1">Cytoplasm</location>
    </subcellularLocation>
</comment>
<comment type="similarity">
    <text evidence="1">Belongs to the class-I aminoacyl-tRNA synthetase family. Glutamate--tRNA ligase type 1 subfamily.</text>
</comment>
<keyword id="KW-0030">Aminoacyl-tRNA synthetase</keyword>
<keyword id="KW-0067">ATP-binding</keyword>
<keyword id="KW-0963">Cytoplasm</keyword>
<keyword id="KW-0436">Ligase</keyword>
<keyword id="KW-0479">Metal-binding</keyword>
<keyword id="KW-0547">Nucleotide-binding</keyword>
<keyword id="KW-0648">Protein biosynthesis</keyword>
<keyword id="KW-1185">Reference proteome</keyword>
<keyword id="KW-0862">Zinc</keyword>
<organism>
    <name type="scientific">Escherichia coli O157:H7</name>
    <dbReference type="NCBI Taxonomy" id="83334"/>
    <lineage>
        <taxon>Bacteria</taxon>
        <taxon>Pseudomonadati</taxon>
        <taxon>Pseudomonadota</taxon>
        <taxon>Gammaproteobacteria</taxon>
        <taxon>Enterobacterales</taxon>
        <taxon>Enterobacteriaceae</taxon>
        <taxon>Escherichia</taxon>
    </lineage>
</organism>
<evidence type="ECO:0000255" key="1">
    <source>
        <dbReference type="HAMAP-Rule" id="MF_00022"/>
    </source>
</evidence>
<gene>
    <name evidence="1" type="primary">gltX</name>
    <name type="ordered locus">Z3665</name>
    <name type="ordered locus">ECs3278</name>
</gene>
<protein>
    <recommendedName>
        <fullName evidence="1">Glutamate--tRNA ligase</fullName>
        <ecNumber evidence="1">6.1.1.17</ecNumber>
    </recommendedName>
    <alternativeName>
        <fullName evidence="1">Glutamyl-tRNA synthetase</fullName>
        <shortName evidence="1">GluRS</shortName>
    </alternativeName>
</protein>
<dbReference type="EC" id="6.1.1.17" evidence="1"/>
<dbReference type="EMBL" id="AE005174">
    <property type="protein sequence ID" value="AAG57524.1"/>
    <property type="molecule type" value="Genomic_DNA"/>
</dbReference>
<dbReference type="EMBL" id="BA000007">
    <property type="protein sequence ID" value="BAB36701.1"/>
    <property type="molecule type" value="Genomic_DNA"/>
</dbReference>
<dbReference type="PIR" id="F91038">
    <property type="entry name" value="F91038"/>
</dbReference>
<dbReference type="PIR" id="H85882">
    <property type="entry name" value="H85882"/>
</dbReference>
<dbReference type="RefSeq" id="NP_311305.1">
    <property type="nucleotide sequence ID" value="NC_002695.1"/>
</dbReference>
<dbReference type="RefSeq" id="WP_000695640.1">
    <property type="nucleotide sequence ID" value="NZ_VOAI01000001.1"/>
</dbReference>
<dbReference type="SMR" id="Q8XBN2"/>
<dbReference type="STRING" id="155864.Z3665"/>
<dbReference type="GeneID" id="75172517"/>
<dbReference type="GeneID" id="915601"/>
<dbReference type="KEGG" id="ece:Z3665"/>
<dbReference type="KEGG" id="ecs:ECs_3278"/>
<dbReference type="PATRIC" id="fig|386585.9.peg.3423"/>
<dbReference type="eggNOG" id="COG0008">
    <property type="taxonomic scope" value="Bacteria"/>
</dbReference>
<dbReference type="HOGENOM" id="CLU_015768_6_0_6"/>
<dbReference type="OMA" id="HGATNVM"/>
<dbReference type="Proteomes" id="UP000000558">
    <property type="component" value="Chromosome"/>
</dbReference>
<dbReference type="Proteomes" id="UP000002519">
    <property type="component" value="Chromosome"/>
</dbReference>
<dbReference type="GO" id="GO:0005829">
    <property type="term" value="C:cytosol"/>
    <property type="evidence" value="ECO:0007669"/>
    <property type="project" value="TreeGrafter"/>
</dbReference>
<dbReference type="GO" id="GO:0005524">
    <property type="term" value="F:ATP binding"/>
    <property type="evidence" value="ECO:0007669"/>
    <property type="project" value="UniProtKB-UniRule"/>
</dbReference>
<dbReference type="GO" id="GO:0004818">
    <property type="term" value="F:glutamate-tRNA ligase activity"/>
    <property type="evidence" value="ECO:0007669"/>
    <property type="project" value="UniProtKB-UniRule"/>
</dbReference>
<dbReference type="GO" id="GO:0000049">
    <property type="term" value="F:tRNA binding"/>
    <property type="evidence" value="ECO:0007669"/>
    <property type="project" value="InterPro"/>
</dbReference>
<dbReference type="GO" id="GO:0008270">
    <property type="term" value="F:zinc ion binding"/>
    <property type="evidence" value="ECO:0007669"/>
    <property type="project" value="UniProtKB-UniRule"/>
</dbReference>
<dbReference type="GO" id="GO:0006424">
    <property type="term" value="P:glutamyl-tRNA aminoacylation"/>
    <property type="evidence" value="ECO:0007669"/>
    <property type="project" value="UniProtKB-UniRule"/>
</dbReference>
<dbReference type="CDD" id="cd00808">
    <property type="entry name" value="GluRS_core"/>
    <property type="match status" value="1"/>
</dbReference>
<dbReference type="FunFam" id="1.10.10.350:FF:000001">
    <property type="entry name" value="Glutamate--tRNA ligase"/>
    <property type="match status" value="1"/>
</dbReference>
<dbReference type="FunFam" id="3.40.50.620:FF:000007">
    <property type="entry name" value="Glutamate--tRNA ligase"/>
    <property type="match status" value="1"/>
</dbReference>
<dbReference type="Gene3D" id="1.10.10.350">
    <property type="match status" value="1"/>
</dbReference>
<dbReference type="Gene3D" id="3.40.50.620">
    <property type="entry name" value="HUPs"/>
    <property type="match status" value="1"/>
</dbReference>
<dbReference type="HAMAP" id="MF_00022">
    <property type="entry name" value="Glu_tRNA_synth_type1"/>
    <property type="match status" value="1"/>
</dbReference>
<dbReference type="InterPro" id="IPR045462">
    <property type="entry name" value="aa-tRNA-synth_I_cd-bd"/>
</dbReference>
<dbReference type="InterPro" id="IPR020751">
    <property type="entry name" value="aa-tRNA-synth_I_codon-bd_sub2"/>
</dbReference>
<dbReference type="InterPro" id="IPR001412">
    <property type="entry name" value="aa-tRNA-synth_I_CS"/>
</dbReference>
<dbReference type="InterPro" id="IPR008925">
    <property type="entry name" value="aa_tRNA-synth_I_cd-bd_sf"/>
</dbReference>
<dbReference type="InterPro" id="IPR004527">
    <property type="entry name" value="Glu-tRNA-ligase_bac/mito"/>
</dbReference>
<dbReference type="InterPro" id="IPR000924">
    <property type="entry name" value="Glu/Gln-tRNA-synth"/>
</dbReference>
<dbReference type="InterPro" id="IPR020058">
    <property type="entry name" value="Glu/Gln-tRNA-synth_Ib_cat-dom"/>
</dbReference>
<dbReference type="InterPro" id="IPR049940">
    <property type="entry name" value="GluQ/Sye"/>
</dbReference>
<dbReference type="InterPro" id="IPR033910">
    <property type="entry name" value="GluRS_core"/>
</dbReference>
<dbReference type="InterPro" id="IPR014729">
    <property type="entry name" value="Rossmann-like_a/b/a_fold"/>
</dbReference>
<dbReference type="NCBIfam" id="TIGR00464">
    <property type="entry name" value="gltX_bact"/>
    <property type="match status" value="1"/>
</dbReference>
<dbReference type="PANTHER" id="PTHR43311">
    <property type="entry name" value="GLUTAMATE--TRNA LIGASE"/>
    <property type="match status" value="1"/>
</dbReference>
<dbReference type="PANTHER" id="PTHR43311:SF2">
    <property type="entry name" value="GLUTAMATE--TRNA LIGASE, MITOCHONDRIAL-RELATED"/>
    <property type="match status" value="1"/>
</dbReference>
<dbReference type="Pfam" id="PF19269">
    <property type="entry name" value="Anticodon_2"/>
    <property type="match status" value="1"/>
</dbReference>
<dbReference type="Pfam" id="PF00749">
    <property type="entry name" value="tRNA-synt_1c"/>
    <property type="match status" value="1"/>
</dbReference>
<dbReference type="PRINTS" id="PR00987">
    <property type="entry name" value="TRNASYNTHGLU"/>
</dbReference>
<dbReference type="SUPFAM" id="SSF48163">
    <property type="entry name" value="An anticodon-binding domain of class I aminoacyl-tRNA synthetases"/>
    <property type="match status" value="1"/>
</dbReference>
<dbReference type="SUPFAM" id="SSF52374">
    <property type="entry name" value="Nucleotidylyl transferase"/>
    <property type="match status" value="1"/>
</dbReference>
<dbReference type="PROSITE" id="PS00178">
    <property type="entry name" value="AA_TRNA_LIGASE_I"/>
    <property type="match status" value="1"/>
</dbReference>
<feature type="chain" id="PRO_0000119556" description="Glutamate--tRNA ligase">
    <location>
        <begin position="1"/>
        <end position="471"/>
    </location>
</feature>
<feature type="short sequence motif" description="'HIGH' region" evidence="1">
    <location>
        <begin position="9"/>
        <end position="19"/>
    </location>
</feature>
<feature type="short sequence motif" description="'KMSKS' region" evidence="1">
    <location>
        <begin position="237"/>
        <end position="241"/>
    </location>
</feature>
<feature type="binding site" evidence="1">
    <location>
        <position position="98"/>
    </location>
    <ligand>
        <name>Zn(2+)</name>
        <dbReference type="ChEBI" id="CHEBI:29105"/>
    </ligand>
</feature>
<feature type="binding site" evidence="1">
    <location>
        <position position="100"/>
    </location>
    <ligand>
        <name>Zn(2+)</name>
        <dbReference type="ChEBI" id="CHEBI:29105"/>
    </ligand>
</feature>
<feature type="binding site" evidence="1">
    <location>
        <position position="125"/>
    </location>
    <ligand>
        <name>Zn(2+)</name>
        <dbReference type="ChEBI" id="CHEBI:29105"/>
    </ligand>
</feature>
<feature type="binding site" evidence="1">
    <location>
        <position position="127"/>
    </location>
    <ligand>
        <name>Zn(2+)</name>
        <dbReference type="ChEBI" id="CHEBI:29105"/>
    </ligand>
</feature>
<feature type="binding site" evidence="1">
    <location>
        <position position="240"/>
    </location>
    <ligand>
        <name>ATP</name>
        <dbReference type="ChEBI" id="CHEBI:30616"/>
    </ligand>
</feature>
<reference key="1">
    <citation type="journal article" date="2001" name="Nature">
        <title>Genome sequence of enterohaemorrhagic Escherichia coli O157:H7.</title>
        <authorList>
            <person name="Perna N.T."/>
            <person name="Plunkett G. III"/>
            <person name="Burland V."/>
            <person name="Mau B."/>
            <person name="Glasner J.D."/>
            <person name="Rose D.J."/>
            <person name="Mayhew G.F."/>
            <person name="Evans P.S."/>
            <person name="Gregor J."/>
            <person name="Kirkpatrick H.A."/>
            <person name="Posfai G."/>
            <person name="Hackett J."/>
            <person name="Klink S."/>
            <person name="Boutin A."/>
            <person name="Shao Y."/>
            <person name="Miller L."/>
            <person name="Grotbeck E.J."/>
            <person name="Davis N.W."/>
            <person name="Lim A."/>
            <person name="Dimalanta E.T."/>
            <person name="Potamousis K."/>
            <person name="Apodaca J."/>
            <person name="Anantharaman T.S."/>
            <person name="Lin J."/>
            <person name="Yen G."/>
            <person name="Schwartz D.C."/>
            <person name="Welch R.A."/>
            <person name="Blattner F.R."/>
        </authorList>
    </citation>
    <scope>NUCLEOTIDE SEQUENCE [LARGE SCALE GENOMIC DNA]</scope>
    <source>
        <strain>O157:H7 / EDL933 / ATCC 700927 / EHEC</strain>
    </source>
</reference>
<reference key="2">
    <citation type="journal article" date="2001" name="DNA Res.">
        <title>Complete genome sequence of enterohemorrhagic Escherichia coli O157:H7 and genomic comparison with a laboratory strain K-12.</title>
        <authorList>
            <person name="Hayashi T."/>
            <person name="Makino K."/>
            <person name="Ohnishi M."/>
            <person name="Kurokawa K."/>
            <person name="Ishii K."/>
            <person name="Yokoyama K."/>
            <person name="Han C.-G."/>
            <person name="Ohtsubo E."/>
            <person name="Nakayama K."/>
            <person name="Murata T."/>
            <person name="Tanaka M."/>
            <person name="Tobe T."/>
            <person name="Iida T."/>
            <person name="Takami H."/>
            <person name="Honda T."/>
            <person name="Sasakawa C."/>
            <person name="Ogasawara N."/>
            <person name="Yasunaga T."/>
            <person name="Kuhara S."/>
            <person name="Shiba T."/>
            <person name="Hattori M."/>
            <person name="Shinagawa H."/>
        </authorList>
    </citation>
    <scope>NUCLEOTIDE SEQUENCE [LARGE SCALE GENOMIC DNA]</scope>
    <source>
        <strain>O157:H7 / Sakai / RIMD 0509952 / EHEC</strain>
    </source>
</reference>
<accession>Q8XBN2</accession>
<sequence length="471" mass="53756">MKIKTRFAPSPTGYLHVGGARTALYSWLFARNHGGEFVLRIEDTDLERSTPEAIEAIMDGMNWLSLEWDEGPYFQTKRFDRYNAVIDQMLEEGTAYKCYCSKERLEALREEQMAKGEKPRYDGRCRHSHEHHADDEPCVVRFANPQEGSVVFDDQIRGPIEFSNQELDDLIIRRTDGSPTYNFCVVVDDWDMEITHVIRGEDHINNTPRQINILKALKAPVPVYAHVSMINGDDGKKLSKRHGAVSVMQYRDDGYLPEALLNYLVRLGWSHGDQEIFTREEMIKYFTLNAVSKSASAFNTDKLLWLNHHYINALPPEYVATHLQWHIEQENIDTRNGPQLADLVKLLGERCKTLKEMAQSCRYFYEDFAEFDADAAKKHLRPVARQPLEVVRDKLAAITDWTAENVHHAIQATADELEVGMGKVGMPLRVAVTGAGQSPALDVTVHAIGKTRSIERINKALAFIAERENQQ</sequence>